<proteinExistence type="evidence at protein level"/>
<reference key="1">
    <citation type="journal article" date="2003" name="Nature">
        <title>The DNA sequence and analysis of human chromosome 14.</title>
        <authorList>
            <person name="Heilig R."/>
            <person name="Eckenberg R."/>
            <person name="Petit J.-L."/>
            <person name="Fonknechten N."/>
            <person name="Da Silva C."/>
            <person name="Cattolico L."/>
            <person name="Levy M."/>
            <person name="Barbe V."/>
            <person name="De Berardinis V."/>
            <person name="Ureta-Vidal A."/>
            <person name="Pelletier E."/>
            <person name="Vico V."/>
            <person name="Anthouard V."/>
            <person name="Rowen L."/>
            <person name="Madan A."/>
            <person name="Qin S."/>
            <person name="Sun H."/>
            <person name="Du H."/>
            <person name="Pepin K."/>
            <person name="Artiguenave F."/>
            <person name="Robert C."/>
            <person name="Cruaud C."/>
            <person name="Bruels T."/>
            <person name="Jaillon O."/>
            <person name="Friedlander L."/>
            <person name="Samson G."/>
            <person name="Brottier P."/>
            <person name="Cure S."/>
            <person name="Segurens B."/>
            <person name="Aniere F."/>
            <person name="Samain S."/>
            <person name="Crespeau H."/>
            <person name="Abbasi N."/>
            <person name="Aiach N."/>
            <person name="Boscus D."/>
            <person name="Dickhoff R."/>
            <person name="Dors M."/>
            <person name="Dubois I."/>
            <person name="Friedman C."/>
            <person name="Gouyvenoux M."/>
            <person name="James R."/>
            <person name="Madan A."/>
            <person name="Mairey-Estrada B."/>
            <person name="Mangenot S."/>
            <person name="Martins N."/>
            <person name="Menard M."/>
            <person name="Oztas S."/>
            <person name="Ratcliffe A."/>
            <person name="Shaffer T."/>
            <person name="Trask B."/>
            <person name="Vacherie B."/>
            <person name="Bellemere C."/>
            <person name="Belser C."/>
            <person name="Besnard-Gonnet M."/>
            <person name="Bartol-Mavel D."/>
            <person name="Boutard M."/>
            <person name="Briez-Silla S."/>
            <person name="Combette S."/>
            <person name="Dufosse-Laurent V."/>
            <person name="Ferron C."/>
            <person name="Lechaplais C."/>
            <person name="Louesse C."/>
            <person name="Muselet D."/>
            <person name="Magdelenat G."/>
            <person name="Pateau E."/>
            <person name="Petit E."/>
            <person name="Sirvain-Trukniewicz P."/>
            <person name="Trybou A."/>
            <person name="Vega-Czarny N."/>
            <person name="Bataille E."/>
            <person name="Bluet E."/>
            <person name="Bordelais I."/>
            <person name="Dubois M."/>
            <person name="Dumont C."/>
            <person name="Guerin T."/>
            <person name="Haffray S."/>
            <person name="Hammadi R."/>
            <person name="Muanga J."/>
            <person name="Pellouin V."/>
            <person name="Robert D."/>
            <person name="Wunderle E."/>
            <person name="Gauguet G."/>
            <person name="Roy A."/>
            <person name="Sainte-Marthe L."/>
            <person name="Verdier J."/>
            <person name="Verdier-Discala C."/>
            <person name="Hillier L.W."/>
            <person name="Fulton L."/>
            <person name="McPherson J."/>
            <person name="Matsuda F."/>
            <person name="Wilson R."/>
            <person name="Scarpelli C."/>
            <person name="Gyapay G."/>
            <person name="Wincker P."/>
            <person name="Saurin W."/>
            <person name="Quetier F."/>
            <person name="Waterston R."/>
            <person name="Hood L."/>
            <person name="Weissenbach J."/>
        </authorList>
    </citation>
    <scope>NUCLEOTIDE SEQUENCE [LARGE SCALE GENOMIC DNA]</scope>
</reference>
<reference key="2">
    <citation type="journal article" date="2006" name="Biochem. Biophys. Res. Commun.">
        <title>Identification of intrahepatic cholangiocarcinoma related genes by comparison with normal liver tissues using expressed sequence tags.</title>
        <authorList>
            <person name="Wang A.G."/>
            <person name="Yoon S.Y."/>
            <person name="Oh J.H."/>
            <person name="Jeon Y.J."/>
            <person name="Kim M."/>
            <person name="Kim J.M."/>
            <person name="Byun S.S."/>
            <person name="Yang J.O."/>
            <person name="Kim J.H."/>
            <person name="Kim D.G."/>
            <person name="Yeom Y.I."/>
            <person name="Yoo H.S."/>
            <person name="Kim Y.S."/>
            <person name="Kim N.S."/>
        </authorList>
    </citation>
    <scope>NUCLEOTIDE SEQUENCE [LARGE SCALE MRNA] OF 1-197</scope>
    <source>
        <tissue>Ovary</tissue>
    </source>
</reference>
<reference key="3">
    <citation type="submission" date="2005-04" db="EMBL/GenBank/DDBJ databases">
        <authorList>
            <person name="Suzuki Y."/>
            <person name="Sugano S."/>
            <person name="Totoki Y."/>
            <person name="Toyoda A."/>
            <person name="Takeda T."/>
            <person name="Sakaki Y."/>
            <person name="Tanaka A."/>
            <person name="Yokoyama S."/>
        </authorList>
    </citation>
    <scope>NUCLEOTIDE SEQUENCE [LARGE SCALE MRNA] OF 9-206</scope>
</reference>
<reference key="4">
    <citation type="journal article" date="2004" name="Genome Res.">
        <title>The status, quality, and expansion of the NIH full-length cDNA project: the Mammalian Gene Collection (MGC).</title>
        <authorList>
            <consortium name="The MGC Project Team"/>
        </authorList>
    </citation>
    <scope>NUCLEOTIDE SEQUENCE [LARGE SCALE MRNA] OF 12-206</scope>
    <scope>VARIANT ALA-27</scope>
    <source>
        <tissue>Ovary</tissue>
    </source>
</reference>
<reference key="5">
    <citation type="journal article" date="2019" name="EMBO Mol. Med.">
        <title>APOPT1/COA8 assists COX assembly and is oppositely regulated by UPS and ROS.</title>
        <authorList>
            <person name="Signes A."/>
            <person name="Cerutti R."/>
            <person name="Dickson A.S."/>
            <person name="Beninca C."/>
            <person name="Hinchy E.C."/>
            <person name="Ghezzi D."/>
            <person name="Carrozzo R."/>
            <person name="Bertini E."/>
            <person name="Murphy M.P."/>
            <person name="Nathan J.A."/>
            <person name="Viscomi C."/>
            <person name="Fernandez-Vizarra E."/>
            <person name="Zeviani M."/>
        </authorList>
    </citation>
    <scope>FUNCTION</scope>
    <scope>SUBCELLULAR LOCATION</scope>
    <scope>ALTERNATIVE SPLICING</scope>
    <scope>CHARACTERIZATION OF VARIANT MC4DN17 79-ARG--ASN-206 DEL</scope>
    <scope>PROTEASOMAL DEGRADATION</scope>
</reference>
<reference key="6">
    <citation type="journal article" date="2014" name="Am. J. Hum. Genet.">
        <title>Mutations in APOPT1, encoding a mitochondrial protein, cause cavitating leukoencephalopathy with cytochrome c oxidase deficiency.</title>
        <authorList>
            <person name="Melchionda L."/>
            <person name="Haack T.B."/>
            <person name="Hardy S."/>
            <person name="Abbink T.E."/>
            <person name="Fernandez-Vizarra E."/>
            <person name="Lamantea E."/>
            <person name="Marchet S."/>
            <person name="Morandi L."/>
            <person name="Moggio M."/>
            <person name="Carrozzo R."/>
            <person name="Torraco A."/>
            <person name="Diodato D."/>
            <person name="Strom T.M."/>
            <person name="Meitinger T."/>
            <person name="Tekturk P."/>
            <person name="Yapici Z."/>
            <person name="Al-Murshedi F."/>
            <person name="Stevens R."/>
            <person name="Rodenburg R.J."/>
            <person name="Lamperti C."/>
            <person name="Ardissone A."/>
            <person name="Moroni I."/>
            <person name="Uziel G."/>
            <person name="Prokisch H."/>
            <person name="Taylor R.W."/>
            <person name="Bertini E."/>
            <person name="van der Knaap M.S."/>
            <person name="Ghezzi D."/>
            <person name="Zeviani M."/>
        </authorList>
    </citation>
    <scope>VARIANTS MC4DN17 79-ARG--ASN-206 DEL; SER-118 AND GLU-124 DEL</scope>
    <scope>CHARACTERIZATION OF VARIANT MC4DN17 79-ARG--ASN-206 DEL</scope>
    <scope>INVOLVEMENT IN MC4DN17</scope>
    <scope>SUBCELLULAR LOCATION</scope>
    <scope>CLEAVAGE</scope>
    <scope>FUNCTION</scope>
    <scope>INDUCTION BY OXIDATIVE STRESS</scope>
    <scope>TISSUE SPECIFICITY</scope>
</reference>
<reference key="7">
    <citation type="journal article" date="2018" name="J. Child Neurol.">
        <title>Cavitating Leukoencephalopathy With Posterior Predominance Caused by a Deletion in the APOPT1 Gene in an Indian Boy.</title>
        <authorList>
            <person name="Sharma S."/>
            <person name="Singh P."/>
            <person name="Fernandez-Vizarra E."/>
            <person name="Zeviani M."/>
            <person name="Van der Knaap M.S."/>
            <person name="Saran R.K."/>
        </authorList>
    </citation>
    <scope>INVOLVEMENT IN MC4DN17</scope>
</reference>
<gene>
    <name evidence="10" type="primary">COA8</name>
    <name type="synonym">APOP1</name>
    <name evidence="10" type="synonym">APOPT1</name>
    <name type="synonym">C14orf153</name>
</gene>
<keyword id="KW-0025">Alternative splicing</keyword>
<keyword id="KW-0053">Apoptosis</keyword>
<keyword id="KW-0225">Disease variant</keyword>
<keyword id="KW-0472">Membrane</keyword>
<keyword id="KW-0496">Mitochondrion</keyword>
<keyword id="KW-0999">Mitochondrion inner membrane</keyword>
<keyword id="KW-1274">Primary mitochondrial disease</keyword>
<keyword id="KW-1267">Proteomics identification</keyword>
<keyword id="KW-1185">Reference proteome</keyword>
<keyword id="KW-0809">Transit peptide</keyword>
<keyword id="KW-0832">Ubl conjugation</keyword>
<comment type="function">
    <text evidence="3 5">Required for cytochrome c complex (COX) IV assembly and function Protects COX assembly from oxidation-induced degradation, COX being the terminal component of the mitochondrial respiratory chain.</text>
</comment>
<comment type="interaction">
    <interactant intactId="EBI-21787450">
        <id>Q96IL0</id>
    </interactant>
    <interactant intactId="EBI-308505">
        <id>O75153</id>
        <label>CLUH</label>
    </interactant>
    <organismsDiffer>false</organismsDiffer>
    <experiments>2</experiments>
</comment>
<comment type="subcellular location">
    <subcellularLocation>
        <location evidence="3 5">Mitochondrion inner membrane</location>
        <topology evidence="9">Peripheral membrane protein</topology>
        <orientation evidence="5">Matrix side</orientation>
    </subcellularLocation>
</comment>
<comment type="alternative products">
    <event type="alternative splicing"/>
    <isoform>
        <id>Q96IL0-1</id>
        <name>1</name>
        <sequence type="displayed"/>
    </isoform>
    <isoform>
        <id>Q96IL0-2</id>
        <name>2</name>
        <sequence type="described" ref="VSP_060246 VSP_060247"/>
    </isoform>
</comment>
<comment type="tissue specificity">
    <text evidence="3">Expressed in fibroblasts.</text>
</comment>
<comment type="induction">
    <text evidence="3 5">In conditions of increased oxidative stress, the protein is stabilized, increasing its mature intramitochondrial form and thereby protecting COX from oxidatively induced degradation.</text>
</comment>
<comment type="PTM">
    <text evidence="3 5">N-terminal mitochondrial targeting sequence is cleaved from the mature protein once in the mitochondrion.</text>
</comment>
<comment type="PTM">
    <text evidence="3 5">In normal conditions, the cytoplasmic precursor protein is rapidly degraded by the ubiquitination-proteasome system (UPS). Oxidative stress induces protein stabilization and import into mitochondria where it protects COX from degradation.</text>
</comment>
<comment type="disease" evidence="3 4 5">
    <disease id="DI-05938">
        <name>Mitochondrial complex IV deficiency, nuclear type 17</name>
        <acronym>MC4DN17</acronym>
        <description>An autosomal recessive mitochondrial disorder with highly variable clinical manifestations and severity. Clinical features vary from acute neurometabolic decompensation in late infancy to subtle neurological signs presenting in adolescence. Encephalopathic episodes are characterized by acute loss of developmental milestones including ability to walk or sit, loss of speech, episodes with somnolence and seizure, and pyramidal signs rapidly evolving into spastic tetraparesis. The clinical course subsequently tends to stabilize and in several subjects marked recovery of neurological milestones is observed over time. Brain imaging shows a cavitating leukodystrophy, predominantly involving the posterior cerebral white matter and the corpus callosum in the acute stage, after which the abnormalities partially improve and then stabilize. Patient tissues show variably decreased levels and activity of mitochondrial respiratory complex IV.</description>
        <dbReference type="MIM" id="619061"/>
    </disease>
    <text>The disease is caused by variants affecting the gene represented in this entry.</text>
</comment>
<comment type="miscellaneous">
    <molecule>Isoform 2</molecule>
    <text evidence="6">Protein may not fold correctly and may be rapidly degraded.</text>
</comment>
<comment type="similarity">
    <text evidence="7">Belongs to the COA8 family.</text>
</comment>
<comment type="caution">
    <text evidence="8 9">It is uncertain whether Met-1 or Met-14 is the initiator. However, according to some experiments, Met-14 seems to be the initiator.</text>
</comment>
<comment type="caution">
    <text evidence="1 3 5">First thought to play a role in the regulation of apoptosis, mediating mitochondria-induced cell death in vascular smooth muscle cells through the release of cytochrome c (COX) from mitochondria and the activation of the caspase cascade (By similarity). However, recent studies show that it is not directly involved in apoptosis regulation but in the protection of COX from oxidatively induced degradation (PubMed:25175347, PubMed:30552096).</text>
</comment>
<comment type="sequence caution" evidence="7">
    <conflict type="erroneous initiation">
        <sequence resource="EMBL-CDS" id="AAH07412"/>
    </conflict>
    <text>Truncated N-terminus.</text>
</comment>
<comment type="sequence caution" evidence="7">
    <conflict type="erroneous initiation">
        <sequence resource="EMBL-CDS" id="BAD96812"/>
    </conflict>
    <text>Truncated N-terminus.</text>
</comment>
<comment type="sequence caution" evidence="7">
    <conflict type="erroneous initiation">
        <sequence resource="EMBL-CDS" id="BAD96823"/>
    </conflict>
    <text>Truncated N-terminus.</text>
</comment>
<dbReference type="EMBL" id="AL139300">
    <property type="status" value="NOT_ANNOTATED_CDS"/>
    <property type="molecule type" value="Genomic_DNA"/>
</dbReference>
<dbReference type="EMBL" id="CB136383">
    <property type="status" value="NOT_ANNOTATED_CDS"/>
    <property type="molecule type" value="mRNA"/>
</dbReference>
<dbReference type="EMBL" id="AK223092">
    <property type="protein sequence ID" value="BAD96812.1"/>
    <property type="status" value="ALT_INIT"/>
    <property type="molecule type" value="mRNA"/>
</dbReference>
<dbReference type="EMBL" id="AK223103">
    <property type="protein sequence ID" value="BAD96823.1"/>
    <property type="status" value="ALT_INIT"/>
    <property type="molecule type" value="mRNA"/>
</dbReference>
<dbReference type="EMBL" id="BC007412">
    <property type="protein sequence ID" value="AAH07412.1"/>
    <property type="status" value="ALT_INIT"/>
    <property type="molecule type" value="mRNA"/>
</dbReference>
<dbReference type="RefSeq" id="NP_001289581.1">
    <property type="nucleotide sequence ID" value="NM_001302652.1"/>
</dbReference>
<dbReference type="RefSeq" id="NP_001289582.1">
    <property type="nucleotide sequence ID" value="NM_001302653.1"/>
</dbReference>
<dbReference type="RefSeq" id="NP_115750.2">
    <property type="nucleotide sequence ID" value="NM_032374.4"/>
</dbReference>
<dbReference type="BioGRID" id="124058">
    <property type="interactions" value="12"/>
</dbReference>
<dbReference type="FunCoup" id="Q96IL0">
    <property type="interactions" value="666"/>
</dbReference>
<dbReference type="IntAct" id="Q96IL0">
    <property type="interactions" value="2"/>
</dbReference>
<dbReference type="STRING" id="9606.ENSP00000386485"/>
<dbReference type="iPTMnet" id="Q96IL0"/>
<dbReference type="PhosphoSitePlus" id="Q96IL0"/>
<dbReference type="BioMuta" id="APOPT1"/>
<dbReference type="DMDM" id="363548522"/>
<dbReference type="jPOST" id="Q96IL0"/>
<dbReference type="MassIVE" id="Q96IL0"/>
<dbReference type="PaxDb" id="9606-ENSP00000386485"/>
<dbReference type="PeptideAtlas" id="Q96IL0"/>
<dbReference type="ProteomicsDB" id="76839"/>
<dbReference type="Pumba" id="Q96IL0"/>
<dbReference type="Antibodypedia" id="66570">
    <property type="antibodies" value="35 antibodies from 11 providers"/>
</dbReference>
<dbReference type="DNASU" id="84334"/>
<dbReference type="Ensembl" id="ENST00000674165.1">
    <molecule id="Q96IL0-1"/>
    <property type="protein sequence ID" value="ENSP00000501341.1"/>
    <property type="gene ID" value="ENSG00000256053.9"/>
</dbReference>
<dbReference type="GeneID" id="84334"/>
<dbReference type="KEGG" id="hsa:84334"/>
<dbReference type="UCSC" id="uc010tyc.3">
    <molecule id="Q96IL0-1"/>
    <property type="organism name" value="human"/>
</dbReference>
<dbReference type="UCSC" id="uc059frt.1">
    <property type="organism name" value="human"/>
</dbReference>
<dbReference type="AGR" id="HGNC:20492"/>
<dbReference type="CTD" id="84334"/>
<dbReference type="DisGeNET" id="84334"/>
<dbReference type="GeneCards" id="COA8"/>
<dbReference type="HGNC" id="HGNC:20492">
    <property type="gene designation" value="COA8"/>
</dbReference>
<dbReference type="HPA" id="ENSG00000256053">
    <property type="expression patterns" value="Tissue enhanced (skeletal)"/>
</dbReference>
<dbReference type="MalaCards" id="COA8"/>
<dbReference type="MIM" id="616003">
    <property type="type" value="gene"/>
</dbReference>
<dbReference type="MIM" id="619061">
    <property type="type" value="phenotype"/>
</dbReference>
<dbReference type="neXtProt" id="NX_Q96IL0"/>
<dbReference type="OpenTargets" id="ENSG00000256053"/>
<dbReference type="Orphanet" id="436271">
    <property type="disease" value="Non-progressive predominantly posterior cavitating leukoencephalopathy with peripheral neuropathy"/>
</dbReference>
<dbReference type="PharmGKB" id="PA134961925"/>
<dbReference type="VEuPathDB" id="HostDB:ENSG00000256053"/>
<dbReference type="eggNOG" id="KOG4094">
    <property type="taxonomic scope" value="Eukaryota"/>
</dbReference>
<dbReference type="GeneTree" id="ENSGT00390000008212"/>
<dbReference type="HOGENOM" id="CLU_118274_0_0_1"/>
<dbReference type="InParanoid" id="Q96IL0"/>
<dbReference type="OrthoDB" id="6246201at2759"/>
<dbReference type="PAN-GO" id="Q96IL0">
    <property type="GO annotations" value="1 GO annotation based on evolutionary models"/>
</dbReference>
<dbReference type="PhylomeDB" id="Q96IL0"/>
<dbReference type="TreeFam" id="TF315168"/>
<dbReference type="PathwayCommons" id="Q96IL0"/>
<dbReference type="SignaLink" id="Q96IL0"/>
<dbReference type="BioGRID-ORCS" id="84334">
    <property type="hits" value="13 hits in 1110 CRISPR screens"/>
</dbReference>
<dbReference type="ChiTaRS" id="APOPT1">
    <property type="organism name" value="human"/>
</dbReference>
<dbReference type="GenomeRNAi" id="84334"/>
<dbReference type="Pharos" id="Q96IL0">
    <property type="development level" value="Tdark"/>
</dbReference>
<dbReference type="PRO" id="PR:Q96IL0"/>
<dbReference type="Proteomes" id="UP000005640">
    <property type="component" value="Chromosome 14"/>
</dbReference>
<dbReference type="RNAct" id="Q96IL0">
    <property type="molecule type" value="protein"/>
</dbReference>
<dbReference type="Bgee" id="ENSG00000256053">
    <property type="expression patterns" value="Expressed in left testis and 180 other cell types or tissues"/>
</dbReference>
<dbReference type="ExpressionAtlas" id="Q96IL0">
    <property type="expression patterns" value="baseline and differential"/>
</dbReference>
<dbReference type="GO" id="GO:0099617">
    <property type="term" value="C:matrix side of mitochondrial inner membrane"/>
    <property type="evidence" value="ECO:0000314"/>
    <property type="project" value="UniProtKB"/>
</dbReference>
<dbReference type="GO" id="GO:0005739">
    <property type="term" value="C:mitochondrion"/>
    <property type="evidence" value="ECO:0000314"/>
    <property type="project" value="UniProtKB"/>
</dbReference>
<dbReference type="GO" id="GO:0097193">
    <property type="term" value="P:intrinsic apoptotic signaling pathway"/>
    <property type="evidence" value="ECO:0007669"/>
    <property type="project" value="InterPro"/>
</dbReference>
<dbReference type="GO" id="GO:0033617">
    <property type="term" value="P:mitochondrial cytochrome c oxidase assembly"/>
    <property type="evidence" value="ECO:0000314"/>
    <property type="project" value="UniProtKB"/>
</dbReference>
<dbReference type="GO" id="GO:0050821">
    <property type="term" value="P:protein stabilization"/>
    <property type="evidence" value="ECO:0000314"/>
    <property type="project" value="UniProtKB"/>
</dbReference>
<dbReference type="GO" id="GO:0000302">
    <property type="term" value="P:response to reactive oxygen species"/>
    <property type="evidence" value="ECO:0000314"/>
    <property type="project" value="UniProtKB"/>
</dbReference>
<dbReference type="InterPro" id="IPR018796">
    <property type="entry name" value="COA8"/>
</dbReference>
<dbReference type="PANTHER" id="PTHR31107">
    <property type="entry name" value="APOPTOGENIC PROTEIN 1, MITOCHONDRIAL"/>
    <property type="match status" value="1"/>
</dbReference>
<dbReference type="PANTHER" id="PTHR31107:SF2">
    <property type="entry name" value="CYTOCHROME C OXIDASE ASSEMBLY FACTOR 8"/>
    <property type="match status" value="1"/>
</dbReference>
<dbReference type="Pfam" id="PF10231">
    <property type="entry name" value="COA8"/>
    <property type="match status" value="1"/>
</dbReference>
<protein>
    <recommendedName>
        <fullName evidence="7">Cytochrome c oxidase assembly factor 8</fullName>
        <shortName evidence="7">COA8</shortName>
    </recommendedName>
    <alternativeName>
        <fullName>Apoptogenic protein 1, mitochondrial</fullName>
        <shortName>APOP-1</shortName>
    </alternativeName>
</protein>
<accession>Q96IL0</accession>
<accession>H7C2Z1</accession>
<accession>Q53G28</accession>
<organism>
    <name type="scientific">Homo sapiens</name>
    <name type="common">Human</name>
    <dbReference type="NCBI Taxonomy" id="9606"/>
    <lineage>
        <taxon>Eukaryota</taxon>
        <taxon>Metazoa</taxon>
        <taxon>Chordata</taxon>
        <taxon>Craniata</taxon>
        <taxon>Vertebrata</taxon>
        <taxon>Euteleostomi</taxon>
        <taxon>Mammalia</taxon>
        <taxon>Eutheria</taxon>
        <taxon>Euarchontoglires</taxon>
        <taxon>Primates</taxon>
        <taxon>Haplorrhini</taxon>
        <taxon>Catarrhini</taxon>
        <taxon>Hominidae</taxon>
        <taxon>Homo</taxon>
    </lineage>
</organism>
<name>COA8_HUMAN</name>
<evidence type="ECO:0000250" key="1">
    <source>
        <dbReference type="UniProtKB" id="Q9CQW7"/>
    </source>
</evidence>
<evidence type="ECO:0000269" key="2">
    <source>
    </source>
</evidence>
<evidence type="ECO:0000269" key="3">
    <source>
    </source>
</evidence>
<evidence type="ECO:0000269" key="4">
    <source>
    </source>
</evidence>
<evidence type="ECO:0000269" key="5">
    <source>
    </source>
</evidence>
<evidence type="ECO:0000303" key="6">
    <source>
    </source>
</evidence>
<evidence type="ECO:0000305" key="7"/>
<evidence type="ECO:0000305" key="8">
    <source>
    </source>
</evidence>
<evidence type="ECO:0000305" key="9">
    <source>
    </source>
</evidence>
<evidence type="ECO:0000312" key="10">
    <source>
        <dbReference type="HGNC" id="HGNC:20492"/>
    </source>
</evidence>
<feature type="transit peptide" description="Mitochondrion" evidence="3">
    <location>
        <begin position="1"/>
        <end position="39"/>
    </location>
</feature>
<feature type="chain" id="PRO_0000019559" description="Cytochrome c oxidase assembly factor 8">
    <location>
        <begin position="40"/>
        <end position="206"/>
    </location>
</feature>
<feature type="splice variant" id="VSP_060246" description="In isoform 2.">
    <original>EKEEF</original>
    <variation>VRKQH</variation>
    <location>
        <begin position="121"/>
        <end position="125"/>
    </location>
</feature>
<feature type="splice variant" id="VSP_060247" description="In isoform 2.">
    <location>
        <begin position="126"/>
        <end position="206"/>
    </location>
</feature>
<feature type="sequence variant" id="VAR_023000" description="In dbSNP:rs2274268." evidence="2">
    <original>P</original>
    <variation>A</variation>
    <location>
        <position position="27"/>
    </location>
</feature>
<feature type="sequence variant" id="VAR_082029" description="In MC4DN17; low steady-state levels of COX subunits and reduced levels of fully assembled COX; highly decreased COX complex IV activity and decreased COX complex II activity in muscle." evidence="3 5">
    <location>
        <begin position="79"/>
        <end position="206"/>
    </location>
</feature>
<feature type="sequence variant" id="VAR_033745" description="In dbSNP:rs35960830.">
    <original>N</original>
    <variation>S</variation>
    <location>
        <position position="88"/>
    </location>
</feature>
<feature type="sequence variant" id="VAR_082030" description="In MC4DN17; uncertain significance; dbSNP:rs587777786." evidence="3">
    <original>F</original>
    <variation>S</variation>
    <location>
        <position position="118"/>
    </location>
</feature>
<feature type="sequence variant" id="VAR_082031" description="In MC4DN17; dbSNP:rs587777787." evidence="3">
    <location>
        <position position="124"/>
    </location>
</feature>
<feature type="sequence conflict" description="In Ref. 2; CB136383." evidence="7" ref="2">
    <original>E</original>
    <variation>G</variation>
    <location>
        <position position="191"/>
    </location>
</feature>
<sequence>MLPCAAGARGRGAMVVLRAGKKTFLPPLCRAFACRGCQLAPERGAERRDTAPSGVSRFCPPRKSCHDWIGPPDKYSNLRPVHFYIPENESPLEQKLRKLRQETQEWNQQFWANQNLTFSKEKEEFIHSRLKTKGLGLRTESGQKATLNAEEMADFYKEFLSKNFQKHMYYNRDWYKRNFAITFFMGKVALERIWNKLKQKQKKRSN</sequence>